<proteinExistence type="evidence at transcript level"/>
<dbReference type="EMBL" id="AJ006722">
    <property type="protein sequence ID" value="CAA07200.1"/>
    <property type="molecule type" value="mRNA"/>
</dbReference>
<dbReference type="RefSeq" id="NP_001116473.1">
    <property type="nucleotide sequence ID" value="NM_001123001.1"/>
</dbReference>
<dbReference type="SMR" id="O62848"/>
<dbReference type="STRING" id="9940.ENSOARP00000007771"/>
<dbReference type="GlyCosmos" id="O62848">
    <property type="glycosylation" value="3 sites, No reported glycans"/>
</dbReference>
<dbReference type="PaxDb" id="9940-ENSOARP00000007771"/>
<dbReference type="GeneID" id="100144424"/>
<dbReference type="KEGG" id="oas:100144424"/>
<dbReference type="CTD" id="912"/>
<dbReference type="eggNOG" id="ENOG502SJH6">
    <property type="taxonomic scope" value="Eukaryota"/>
</dbReference>
<dbReference type="OrthoDB" id="8890485at2759"/>
<dbReference type="Proteomes" id="UP000002356">
    <property type="component" value="Unplaced"/>
</dbReference>
<dbReference type="GO" id="GO:0016323">
    <property type="term" value="C:basolateral plasma membrane"/>
    <property type="evidence" value="ECO:0007669"/>
    <property type="project" value="UniProtKB-SubCell"/>
</dbReference>
<dbReference type="GO" id="GO:0005789">
    <property type="term" value="C:endoplasmic reticulum membrane"/>
    <property type="evidence" value="ECO:0007669"/>
    <property type="project" value="UniProtKB-SubCell"/>
</dbReference>
<dbReference type="GO" id="GO:0010008">
    <property type="term" value="C:endosome membrane"/>
    <property type="evidence" value="ECO:0007669"/>
    <property type="project" value="UniProtKB-SubCell"/>
</dbReference>
<dbReference type="GO" id="GO:0009897">
    <property type="term" value="C:external side of plasma membrane"/>
    <property type="evidence" value="ECO:0007669"/>
    <property type="project" value="TreeGrafter"/>
</dbReference>
<dbReference type="GO" id="GO:0005615">
    <property type="term" value="C:extracellular space"/>
    <property type="evidence" value="ECO:0007669"/>
    <property type="project" value="TreeGrafter"/>
</dbReference>
<dbReference type="GO" id="GO:0005765">
    <property type="term" value="C:lysosomal membrane"/>
    <property type="evidence" value="ECO:0007669"/>
    <property type="project" value="UniProtKB-SubCell"/>
</dbReference>
<dbReference type="GO" id="GO:0005764">
    <property type="term" value="C:lysosome"/>
    <property type="evidence" value="ECO:0000250"/>
    <property type="project" value="UniProtKB"/>
</dbReference>
<dbReference type="GO" id="GO:0030883">
    <property type="term" value="F:endogenous lipid antigen binding"/>
    <property type="evidence" value="ECO:0007669"/>
    <property type="project" value="TreeGrafter"/>
</dbReference>
<dbReference type="GO" id="GO:0030884">
    <property type="term" value="F:exogenous lipid antigen binding"/>
    <property type="evidence" value="ECO:0007669"/>
    <property type="project" value="TreeGrafter"/>
</dbReference>
<dbReference type="GO" id="GO:0030882">
    <property type="term" value="F:lipid antigen binding"/>
    <property type="evidence" value="ECO:0000250"/>
    <property type="project" value="UniProtKB"/>
</dbReference>
<dbReference type="GO" id="GO:0071723">
    <property type="term" value="F:lipopeptide binding"/>
    <property type="evidence" value="ECO:0007669"/>
    <property type="project" value="TreeGrafter"/>
</dbReference>
<dbReference type="GO" id="GO:0048006">
    <property type="term" value="P:antigen processing and presentation, endogenous lipid antigen via MHC class Ib"/>
    <property type="evidence" value="ECO:0007669"/>
    <property type="project" value="TreeGrafter"/>
</dbReference>
<dbReference type="GO" id="GO:0048007">
    <property type="term" value="P:antigen processing and presentation, exogenous lipid antigen via MHC class Ib"/>
    <property type="evidence" value="ECO:0007669"/>
    <property type="project" value="TreeGrafter"/>
</dbReference>
<dbReference type="GO" id="GO:0045087">
    <property type="term" value="P:innate immune response"/>
    <property type="evidence" value="ECO:0007669"/>
    <property type="project" value="UniProtKB-KW"/>
</dbReference>
<dbReference type="GO" id="GO:0001916">
    <property type="term" value="P:positive regulation of T cell mediated cytotoxicity"/>
    <property type="evidence" value="ECO:0007669"/>
    <property type="project" value="TreeGrafter"/>
</dbReference>
<dbReference type="CDD" id="cd21029">
    <property type="entry name" value="IgC1_CD1"/>
    <property type="match status" value="1"/>
</dbReference>
<dbReference type="FunFam" id="2.60.40.10:FF:000254">
    <property type="entry name" value="Antigen-presenting glycoprotein CD1d1"/>
    <property type="match status" value="1"/>
</dbReference>
<dbReference type="FunFam" id="3.30.500.10:FF:000002">
    <property type="entry name" value="Antigen-presenting glycoprotein CD1d1"/>
    <property type="match status" value="1"/>
</dbReference>
<dbReference type="Gene3D" id="2.60.40.10">
    <property type="entry name" value="Immunoglobulins"/>
    <property type="match status" value="1"/>
</dbReference>
<dbReference type="Gene3D" id="3.30.500.10">
    <property type="entry name" value="MHC class I-like antigen recognition-like"/>
    <property type="match status" value="1"/>
</dbReference>
<dbReference type="InterPro" id="IPR007110">
    <property type="entry name" value="Ig-like_dom"/>
</dbReference>
<dbReference type="InterPro" id="IPR036179">
    <property type="entry name" value="Ig-like_dom_sf"/>
</dbReference>
<dbReference type="InterPro" id="IPR013783">
    <property type="entry name" value="Ig-like_fold"/>
</dbReference>
<dbReference type="InterPro" id="IPR003597">
    <property type="entry name" value="Ig_C1-set"/>
</dbReference>
<dbReference type="InterPro" id="IPR050208">
    <property type="entry name" value="MHC_class-I_related"/>
</dbReference>
<dbReference type="InterPro" id="IPR011161">
    <property type="entry name" value="MHC_I-like_Ag-recog"/>
</dbReference>
<dbReference type="InterPro" id="IPR037055">
    <property type="entry name" value="MHC_I-like_Ag-recog_sf"/>
</dbReference>
<dbReference type="InterPro" id="IPR011162">
    <property type="entry name" value="MHC_I/II-like_Ag-recog"/>
</dbReference>
<dbReference type="PANTHER" id="PTHR16675:SF175">
    <property type="entry name" value="ANTIGEN-PRESENTING GLYCOPROTEIN CD1D"/>
    <property type="match status" value="1"/>
</dbReference>
<dbReference type="PANTHER" id="PTHR16675">
    <property type="entry name" value="MHC CLASS I-RELATED"/>
    <property type="match status" value="1"/>
</dbReference>
<dbReference type="Pfam" id="PF07654">
    <property type="entry name" value="C1-set"/>
    <property type="match status" value="1"/>
</dbReference>
<dbReference type="Pfam" id="PF16497">
    <property type="entry name" value="MHC_I_3"/>
    <property type="match status" value="1"/>
</dbReference>
<dbReference type="SMART" id="SM00407">
    <property type="entry name" value="IGc1"/>
    <property type="match status" value="1"/>
</dbReference>
<dbReference type="SUPFAM" id="SSF48726">
    <property type="entry name" value="Immunoglobulin"/>
    <property type="match status" value="1"/>
</dbReference>
<dbReference type="SUPFAM" id="SSF54452">
    <property type="entry name" value="MHC antigen-recognition domain"/>
    <property type="match status" value="1"/>
</dbReference>
<dbReference type="PROSITE" id="PS50835">
    <property type="entry name" value="IG_LIKE"/>
    <property type="match status" value="1"/>
</dbReference>
<gene>
    <name type="primary">CD1D</name>
</gene>
<keyword id="KW-1003">Cell membrane</keyword>
<keyword id="KW-1015">Disulfide bond</keyword>
<keyword id="KW-0256">Endoplasmic reticulum</keyword>
<keyword id="KW-0967">Endosome</keyword>
<keyword id="KW-0325">Glycoprotein</keyword>
<keyword id="KW-0391">Immunity</keyword>
<keyword id="KW-0393">Immunoglobulin domain</keyword>
<keyword id="KW-0399">Innate immunity</keyword>
<keyword id="KW-0458">Lysosome</keyword>
<keyword id="KW-0472">Membrane</keyword>
<keyword id="KW-1185">Reference proteome</keyword>
<keyword id="KW-0732">Signal</keyword>
<keyword id="KW-0812">Transmembrane</keyword>
<keyword id="KW-1133">Transmembrane helix</keyword>
<name>CD1D_SHEEP</name>
<organism>
    <name type="scientific">Ovis aries</name>
    <name type="common">Sheep</name>
    <dbReference type="NCBI Taxonomy" id="9940"/>
    <lineage>
        <taxon>Eukaryota</taxon>
        <taxon>Metazoa</taxon>
        <taxon>Chordata</taxon>
        <taxon>Craniata</taxon>
        <taxon>Vertebrata</taxon>
        <taxon>Euteleostomi</taxon>
        <taxon>Mammalia</taxon>
        <taxon>Eutheria</taxon>
        <taxon>Laurasiatheria</taxon>
        <taxon>Artiodactyla</taxon>
        <taxon>Ruminantia</taxon>
        <taxon>Pecora</taxon>
        <taxon>Bovidae</taxon>
        <taxon>Caprinae</taxon>
        <taxon>Ovis</taxon>
    </lineage>
</organism>
<sequence length="335" mass="38469">MGCLLFLVLLEFQKIWGSFEAPQTSFPFRFLQISSFANHSWTRTDGLMWLGELQPYTWRNESSTIRFLKHWSQGTFSDQQWEQLQHTFQVYRSSFTRDIREFVKMLPGDYPFEIQISGGCELLPRNISESFLRAALQEKDVLSFQGMSWVSAPDAPPWSQVVCKVLNEDQGTKETVHWLLHDICPELVKGLMQTGKSELEKQVKPEAWLSSGPSPGPDRLLLGCHVSGFYPKPVWVMWMRGEQEEPGTQQGDVMPNADSTWYLRVTLEVAAGEAAGLSCRVKHSSLGDQDIILYWDGKRVSRGLIVVLVILVFVLLFVGGLVFWFRKHRRYQDIS</sequence>
<reference key="1">
    <citation type="journal article" date="1999" name="Immunogenetics">
        <title>Amino-terminal sequencing of sheep CD1 antigens and identification of a sheep CD1D gene.</title>
        <authorList>
            <person name="Rhind S.M."/>
            <person name="Hopkins J."/>
            <person name="Dutia B.M."/>
        </authorList>
    </citation>
    <scope>NUCLEOTIDE SEQUENCE [MRNA]</scope>
</reference>
<protein>
    <recommendedName>
        <fullName>Antigen-presenting glycoprotein CD1d</fullName>
    </recommendedName>
    <cdAntigenName>CD1d</cdAntigenName>
</protein>
<feature type="signal peptide" evidence="3">
    <location>
        <begin position="1"/>
        <end position="17"/>
    </location>
</feature>
<feature type="chain" id="PRO_0000014598" description="Antigen-presenting glycoprotein CD1d">
    <location>
        <begin position="18"/>
        <end position="335"/>
    </location>
</feature>
<feature type="topological domain" description="Extracellular" evidence="3">
    <location>
        <begin position="18"/>
        <end position="304"/>
    </location>
</feature>
<feature type="transmembrane region" description="Helical" evidence="3">
    <location>
        <begin position="305"/>
        <end position="325"/>
    </location>
</feature>
<feature type="topological domain" description="Cytoplasmic" evidence="3">
    <location>
        <begin position="326"/>
        <end position="335"/>
    </location>
</feature>
<feature type="domain" description="Ig-like">
    <location>
        <begin position="185"/>
        <end position="295"/>
    </location>
</feature>
<feature type="short sequence motif" description="Internalization signal" evidence="1">
    <location>
        <begin position="331"/>
        <end position="334"/>
    </location>
</feature>
<feature type="binding site" evidence="2">
    <location>
        <position position="98"/>
    </location>
    <ligand>
        <name>a D-galactosylceramide</name>
        <dbReference type="ChEBI" id="CHEBI:36498"/>
    </ligand>
</feature>
<feature type="binding site" evidence="2">
    <location>
        <begin position="169"/>
        <end position="172"/>
    </location>
    <ligand>
        <name>a D-galactosylceramide</name>
        <dbReference type="ChEBI" id="CHEBI:36498"/>
    </ligand>
</feature>
<feature type="binding site" evidence="1">
    <location>
        <position position="169"/>
    </location>
    <ligand>
        <name>a D-galactosylceramide</name>
        <dbReference type="ChEBI" id="CHEBI:36498"/>
    </ligand>
</feature>
<feature type="binding site" evidence="1">
    <location>
        <position position="172"/>
    </location>
    <ligand>
        <name>a D-galactosylceramide</name>
        <dbReference type="ChEBI" id="CHEBI:36498"/>
    </ligand>
</feature>
<feature type="glycosylation site" description="N-linked (GlcNAc...) asparagine" evidence="3">
    <location>
        <position position="38"/>
    </location>
</feature>
<feature type="glycosylation site" description="N-linked (GlcNAc...) asparagine" evidence="3">
    <location>
        <position position="60"/>
    </location>
</feature>
<feature type="glycosylation site" description="N-linked (GlcNAc...) asparagine" evidence="3">
    <location>
        <position position="126"/>
    </location>
</feature>
<feature type="disulfide bond" evidence="4">
    <location>
        <begin position="120"/>
        <end position="184"/>
    </location>
</feature>
<feature type="disulfide bond" evidence="4">
    <location>
        <begin position="224"/>
        <end position="279"/>
    </location>
</feature>
<evidence type="ECO:0000250" key="1"/>
<evidence type="ECO:0000250" key="2">
    <source>
        <dbReference type="UniProtKB" id="P15813"/>
    </source>
</evidence>
<evidence type="ECO:0000255" key="3"/>
<evidence type="ECO:0000255" key="4">
    <source>
        <dbReference type="PROSITE-ProRule" id="PRU00114"/>
    </source>
</evidence>
<accession>O62848</accession>
<comment type="function">
    <text evidence="1">Antigen-presenting protein that binds self and non-self glycolipids and presents them to T-cell receptors on natural killer T-cells.</text>
</comment>
<comment type="subunit">
    <text evidence="1">Heterodimer with B2M (beta-2-microglobulin). Interacts with MHC II and CD74 (By similarity).</text>
</comment>
<comment type="subcellular location">
    <subcellularLocation>
        <location evidence="2">Cell membrane</location>
        <topology evidence="2">Single-pass type I membrane protein</topology>
    </subcellularLocation>
    <subcellularLocation>
        <location evidence="2">Basolateral cell membrane</location>
        <topology evidence="2">Single-pass type I membrane protein</topology>
    </subcellularLocation>
    <subcellularLocation>
        <location evidence="2">Endosome membrane</location>
        <topology evidence="2">Single-pass type I membrane protein</topology>
    </subcellularLocation>
    <subcellularLocation>
        <location evidence="2">Lysosome membrane</location>
        <topology evidence="2">Single-pass type I membrane protein</topology>
    </subcellularLocation>
    <subcellularLocation>
        <location evidence="2">Endoplasmic reticulum membrane</location>
        <topology evidence="2">Single-pass type I membrane protein</topology>
    </subcellularLocation>
    <text evidence="2">Subject to intracellular trafficking between the cell membrane, endosomes and lysosomes.</text>
</comment>
<comment type="tissue specificity">
    <text>Expressed on cortical thymocytes, on certain T-cell leukemias, and in various other tissues.</text>
</comment>
<comment type="miscellaneous">
    <text evidence="1">During protein synthesis and maturation, CD1 family members bind endogenous lipids that are replaced by lipid or glycolipid antigens when the proteins are internalized and pass through endosomes, before trafficking back to the cell surface.</text>
</comment>